<organism>
    <name type="scientific">Yersinia pestis bv. Antiqua (strain Antiqua)</name>
    <dbReference type="NCBI Taxonomy" id="360102"/>
    <lineage>
        <taxon>Bacteria</taxon>
        <taxon>Pseudomonadati</taxon>
        <taxon>Pseudomonadota</taxon>
        <taxon>Gammaproteobacteria</taxon>
        <taxon>Enterobacterales</taxon>
        <taxon>Yersiniaceae</taxon>
        <taxon>Yersinia</taxon>
    </lineage>
</organism>
<feature type="signal peptide" evidence="1">
    <location>
        <begin position="1"/>
        <end position="20"/>
    </location>
</feature>
<feature type="chain" id="PRO_5000115828" description="UPF0319 protein YPA_0734">
    <location>
        <begin position="21"/>
        <end position="226"/>
    </location>
</feature>
<evidence type="ECO:0000255" key="1">
    <source>
        <dbReference type="HAMAP-Rule" id="MF_00789"/>
    </source>
</evidence>
<name>Y734_YERPA</name>
<keyword id="KW-0732">Signal</keyword>
<comment type="similarity">
    <text evidence="1">Belongs to the UPF0319 family.</text>
</comment>
<reference key="1">
    <citation type="journal article" date="2006" name="J. Bacteriol.">
        <title>Complete genome sequence of Yersinia pestis strains Antiqua and Nepal516: evidence of gene reduction in an emerging pathogen.</title>
        <authorList>
            <person name="Chain P.S.G."/>
            <person name="Hu P."/>
            <person name="Malfatti S.A."/>
            <person name="Radnedge L."/>
            <person name="Larimer F."/>
            <person name="Vergez L.M."/>
            <person name="Worsham P."/>
            <person name="Chu M.C."/>
            <person name="Andersen G.L."/>
        </authorList>
    </citation>
    <scope>NUCLEOTIDE SEQUENCE [LARGE SCALE GENOMIC DNA]</scope>
    <source>
        <strain>Antiqua</strain>
    </source>
</reference>
<gene>
    <name type="ordered locus">YPA_0734</name>
</gene>
<sequence>MKLGLVAGMLAVCFSFSSVAMTLKLTPEIDLLVVDGKNMSGSLLKGADSLELNSGMHQILFKVIKPLPTDPLVLYSSPPLIVVFNAHNTRSVAIKLPVINTLRDGHQFSKNPLYQLIGDNGHPLSVRHDVLRQDHLNNSTTLETVMAAYNVGKYNASVPAFAAIPPSPVSAVPGTTIPVAGVNTPHKTASLQGENVTEQMLQYWFLQANPETQKRFLIWAKKQPIH</sequence>
<accession>Q1CA20</accession>
<protein>
    <recommendedName>
        <fullName evidence="1">UPF0319 protein YPA_0734</fullName>
    </recommendedName>
</protein>
<proteinExistence type="inferred from homology"/>
<dbReference type="EMBL" id="CP000308">
    <property type="protein sequence ID" value="ABG12702.1"/>
    <property type="molecule type" value="Genomic_DNA"/>
</dbReference>
<dbReference type="RefSeq" id="WP_002213058.1">
    <property type="nucleotide sequence ID" value="NZ_CP009906.1"/>
</dbReference>
<dbReference type="KEGG" id="ypa:YPA_0734"/>
<dbReference type="Proteomes" id="UP000001971">
    <property type="component" value="Chromosome"/>
</dbReference>
<dbReference type="HAMAP" id="MF_00789">
    <property type="entry name" value="UPF0319"/>
    <property type="match status" value="1"/>
</dbReference>
<dbReference type="InterPro" id="IPR018635">
    <property type="entry name" value="UPF0319"/>
</dbReference>
<dbReference type="NCBIfam" id="NF002967">
    <property type="entry name" value="PRK03641.1"/>
    <property type="match status" value="1"/>
</dbReference>
<dbReference type="PANTHER" id="PTHR38108">
    <property type="entry name" value="UPF0319 PROTEIN YCCT"/>
    <property type="match status" value="1"/>
</dbReference>
<dbReference type="PANTHER" id="PTHR38108:SF1">
    <property type="entry name" value="UPF0319 PROTEIN YCCT"/>
    <property type="match status" value="1"/>
</dbReference>
<dbReference type="Pfam" id="PF09829">
    <property type="entry name" value="DUF2057"/>
    <property type="match status" value="1"/>
</dbReference>